<keyword id="KW-0067">ATP-binding</keyword>
<keyword id="KW-0238">DNA-binding</keyword>
<keyword id="KW-0479">Metal-binding</keyword>
<keyword id="KW-0547">Nucleotide-binding</keyword>
<keyword id="KW-0678">Repressor</keyword>
<keyword id="KW-0804">Transcription</keyword>
<keyword id="KW-0805">Transcription regulation</keyword>
<keyword id="KW-0862">Zinc</keyword>
<keyword id="KW-0863">Zinc-finger</keyword>
<organism>
    <name type="scientific">Mycobacterium bovis (strain BCG / Tokyo 172 / ATCC 35737 / TMC 1019)</name>
    <dbReference type="NCBI Taxonomy" id="561275"/>
    <lineage>
        <taxon>Bacteria</taxon>
        <taxon>Bacillati</taxon>
        <taxon>Actinomycetota</taxon>
        <taxon>Actinomycetes</taxon>
        <taxon>Mycobacteriales</taxon>
        <taxon>Mycobacteriaceae</taxon>
        <taxon>Mycobacterium</taxon>
        <taxon>Mycobacterium tuberculosis complex</taxon>
    </lineage>
</organism>
<dbReference type="EMBL" id="AP010918">
    <property type="protein sequence ID" value="BAH27006.1"/>
    <property type="molecule type" value="Genomic_DNA"/>
</dbReference>
<dbReference type="RefSeq" id="WP_003413973.1">
    <property type="nucleotide sequence ID" value="NZ_CP014566.1"/>
</dbReference>
<dbReference type="SMR" id="C1AFH7"/>
<dbReference type="GeneID" id="45426705"/>
<dbReference type="KEGG" id="mbt:JTY_2725"/>
<dbReference type="HOGENOM" id="CLU_108412_1_0_11"/>
<dbReference type="GO" id="GO:0005524">
    <property type="term" value="F:ATP binding"/>
    <property type="evidence" value="ECO:0007669"/>
    <property type="project" value="UniProtKB-KW"/>
</dbReference>
<dbReference type="GO" id="GO:0003677">
    <property type="term" value="F:DNA binding"/>
    <property type="evidence" value="ECO:0007669"/>
    <property type="project" value="UniProtKB-KW"/>
</dbReference>
<dbReference type="GO" id="GO:0008270">
    <property type="term" value="F:zinc ion binding"/>
    <property type="evidence" value="ECO:0007669"/>
    <property type="project" value="UniProtKB-UniRule"/>
</dbReference>
<dbReference type="GO" id="GO:0045892">
    <property type="term" value="P:negative regulation of DNA-templated transcription"/>
    <property type="evidence" value="ECO:0007669"/>
    <property type="project" value="UniProtKB-UniRule"/>
</dbReference>
<dbReference type="HAMAP" id="MF_00440">
    <property type="entry name" value="NrdR"/>
    <property type="match status" value="1"/>
</dbReference>
<dbReference type="InterPro" id="IPR005144">
    <property type="entry name" value="ATP-cone_dom"/>
</dbReference>
<dbReference type="InterPro" id="IPR055173">
    <property type="entry name" value="NrdR-like_N"/>
</dbReference>
<dbReference type="InterPro" id="IPR003796">
    <property type="entry name" value="RNR_NrdR-like"/>
</dbReference>
<dbReference type="NCBIfam" id="TIGR00244">
    <property type="entry name" value="transcriptional regulator NrdR"/>
    <property type="match status" value="1"/>
</dbReference>
<dbReference type="PANTHER" id="PTHR30455">
    <property type="entry name" value="TRANSCRIPTIONAL REPRESSOR NRDR"/>
    <property type="match status" value="1"/>
</dbReference>
<dbReference type="PANTHER" id="PTHR30455:SF2">
    <property type="entry name" value="TRANSCRIPTIONAL REPRESSOR NRDR"/>
    <property type="match status" value="1"/>
</dbReference>
<dbReference type="Pfam" id="PF03477">
    <property type="entry name" value="ATP-cone"/>
    <property type="match status" value="1"/>
</dbReference>
<dbReference type="Pfam" id="PF22811">
    <property type="entry name" value="Zn_ribbon_NrdR"/>
    <property type="match status" value="1"/>
</dbReference>
<dbReference type="PROSITE" id="PS51161">
    <property type="entry name" value="ATP_CONE"/>
    <property type="match status" value="1"/>
</dbReference>
<evidence type="ECO:0000255" key="1">
    <source>
        <dbReference type="HAMAP-Rule" id="MF_00440"/>
    </source>
</evidence>
<feature type="chain" id="PRO_1000191806" description="Transcriptional repressor NrdR">
    <location>
        <begin position="1"/>
        <end position="154"/>
    </location>
</feature>
<feature type="domain" description="ATP-cone" evidence="1">
    <location>
        <begin position="46"/>
        <end position="136"/>
    </location>
</feature>
<feature type="zinc finger region" evidence="1">
    <location>
        <begin position="3"/>
        <end position="34"/>
    </location>
</feature>
<comment type="function">
    <text evidence="1">Negatively regulates transcription of bacterial ribonucleotide reductase nrd genes and operons by binding to NrdR-boxes.</text>
</comment>
<comment type="cofactor">
    <cofactor evidence="1">
        <name>Zn(2+)</name>
        <dbReference type="ChEBI" id="CHEBI:29105"/>
    </cofactor>
    <text evidence="1">Binds 1 zinc ion.</text>
</comment>
<comment type="similarity">
    <text evidence="1">Belongs to the NrdR family.</text>
</comment>
<gene>
    <name evidence="1" type="primary">nrdR</name>
    <name type="ordered locus">JTY_2725</name>
</gene>
<sequence>MHCPFCRHPDSRVIDSRETDEGQAIRRRRSCPECGRRFTTVETAVLAVVKRSGVTEPFSREKVISGVRRACQGRQVDDDALNLLAQQVEDSVRAAGSPEIPSHDVGLAILGPLRELDEVAYLRFASVYRSFSSADDFAREIEALRAHRNLSAHS</sequence>
<reference key="1">
    <citation type="journal article" date="2009" name="Vaccine">
        <title>Whole genome sequence analysis of Mycobacterium bovis bacillus Calmette-Guerin (BCG) Tokyo 172: a comparative study of BCG vaccine substrains.</title>
        <authorList>
            <person name="Seki M."/>
            <person name="Honda I."/>
            <person name="Fujita I."/>
            <person name="Yano I."/>
            <person name="Yamamoto S."/>
            <person name="Koyama A."/>
        </authorList>
    </citation>
    <scope>NUCLEOTIDE SEQUENCE [LARGE SCALE GENOMIC DNA]</scope>
    <source>
        <strain>BCG / Tokyo 172 / ATCC 35737 / TMC 1019</strain>
    </source>
</reference>
<accession>C1AFH7</accession>
<protein>
    <recommendedName>
        <fullName evidence="1">Transcriptional repressor NrdR</fullName>
    </recommendedName>
</protein>
<name>NRDR_MYCBT</name>
<proteinExistence type="inferred from homology"/>